<reference key="1">
    <citation type="journal article" date="1997" name="Microbiology">
        <title>Nucleotide sequence and analysis of the phoB-rrnE-groESL region of the Bacillus subtilis chromosome.</title>
        <authorList>
            <person name="Sadaie Y."/>
            <person name="Yata K."/>
            <person name="Fujita M."/>
            <person name="Sagai H."/>
            <person name="Itaya M."/>
            <person name="Kasahara Y."/>
            <person name="Ogasawara N."/>
        </authorList>
    </citation>
    <scope>NUCLEOTIDE SEQUENCE [GENOMIC DNA]</scope>
    <source>
        <strain>168</strain>
    </source>
</reference>
<reference key="2">
    <citation type="journal article" date="1997" name="Nature">
        <title>The complete genome sequence of the Gram-positive bacterium Bacillus subtilis.</title>
        <authorList>
            <person name="Kunst F."/>
            <person name="Ogasawara N."/>
            <person name="Moszer I."/>
            <person name="Albertini A.M."/>
            <person name="Alloni G."/>
            <person name="Azevedo V."/>
            <person name="Bertero M.G."/>
            <person name="Bessieres P."/>
            <person name="Bolotin A."/>
            <person name="Borchert S."/>
            <person name="Borriss R."/>
            <person name="Boursier L."/>
            <person name="Brans A."/>
            <person name="Braun M."/>
            <person name="Brignell S.C."/>
            <person name="Bron S."/>
            <person name="Brouillet S."/>
            <person name="Bruschi C.V."/>
            <person name="Caldwell B."/>
            <person name="Capuano V."/>
            <person name="Carter N.M."/>
            <person name="Choi S.-K."/>
            <person name="Codani J.-J."/>
            <person name="Connerton I.F."/>
            <person name="Cummings N.J."/>
            <person name="Daniel R.A."/>
            <person name="Denizot F."/>
            <person name="Devine K.M."/>
            <person name="Duesterhoeft A."/>
            <person name="Ehrlich S.D."/>
            <person name="Emmerson P.T."/>
            <person name="Entian K.-D."/>
            <person name="Errington J."/>
            <person name="Fabret C."/>
            <person name="Ferrari E."/>
            <person name="Foulger D."/>
            <person name="Fritz C."/>
            <person name="Fujita M."/>
            <person name="Fujita Y."/>
            <person name="Fuma S."/>
            <person name="Galizzi A."/>
            <person name="Galleron N."/>
            <person name="Ghim S.-Y."/>
            <person name="Glaser P."/>
            <person name="Goffeau A."/>
            <person name="Golightly E.J."/>
            <person name="Grandi G."/>
            <person name="Guiseppi G."/>
            <person name="Guy B.J."/>
            <person name="Haga K."/>
            <person name="Haiech J."/>
            <person name="Harwood C.R."/>
            <person name="Henaut A."/>
            <person name="Hilbert H."/>
            <person name="Holsappel S."/>
            <person name="Hosono S."/>
            <person name="Hullo M.-F."/>
            <person name="Itaya M."/>
            <person name="Jones L.-M."/>
            <person name="Joris B."/>
            <person name="Karamata D."/>
            <person name="Kasahara Y."/>
            <person name="Klaerr-Blanchard M."/>
            <person name="Klein C."/>
            <person name="Kobayashi Y."/>
            <person name="Koetter P."/>
            <person name="Koningstein G."/>
            <person name="Krogh S."/>
            <person name="Kumano M."/>
            <person name="Kurita K."/>
            <person name="Lapidus A."/>
            <person name="Lardinois S."/>
            <person name="Lauber J."/>
            <person name="Lazarevic V."/>
            <person name="Lee S.-M."/>
            <person name="Levine A."/>
            <person name="Liu H."/>
            <person name="Masuda S."/>
            <person name="Mauel C."/>
            <person name="Medigue C."/>
            <person name="Medina N."/>
            <person name="Mellado R.P."/>
            <person name="Mizuno M."/>
            <person name="Moestl D."/>
            <person name="Nakai S."/>
            <person name="Noback M."/>
            <person name="Noone D."/>
            <person name="O'Reilly M."/>
            <person name="Ogawa K."/>
            <person name="Ogiwara A."/>
            <person name="Oudega B."/>
            <person name="Park S.-H."/>
            <person name="Parro V."/>
            <person name="Pohl T.M."/>
            <person name="Portetelle D."/>
            <person name="Porwollik S."/>
            <person name="Prescott A.M."/>
            <person name="Presecan E."/>
            <person name="Pujic P."/>
            <person name="Purnelle B."/>
            <person name="Rapoport G."/>
            <person name="Rey M."/>
            <person name="Reynolds S."/>
            <person name="Rieger M."/>
            <person name="Rivolta C."/>
            <person name="Rocha E."/>
            <person name="Roche B."/>
            <person name="Rose M."/>
            <person name="Sadaie Y."/>
            <person name="Sato T."/>
            <person name="Scanlan E."/>
            <person name="Schleich S."/>
            <person name="Schroeter R."/>
            <person name="Scoffone F."/>
            <person name="Sekiguchi J."/>
            <person name="Sekowska A."/>
            <person name="Seror S.J."/>
            <person name="Serror P."/>
            <person name="Shin B.-S."/>
            <person name="Soldo B."/>
            <person name="Sorokin A."/>
            <person name="Tacconi E."/>
            <person name="Takagi T."/>
            <person name="Takahashi H."/>
            <person name="Takemaru K."/>
            <person name="Takeuchi M."/>
            <person name="Tamakoshi A."/>
            <person name="Tanaka T."/>
            <person name="Terpstra P."/>
            <person name="Tognoni A."/>
            <person name="Tosato V."/>
            <person name="Uchiyama S."/>
            <person name="Vandenbol M."/>
            <person name="Vannier F."/>
            <person name="Vassarotti A."/>
            <person name="Viari A."/>
            <person name="Wambutt R."/>
            <person name="Wedler E."/>
            <person name="Wedler H."/>
            <person name="Weitzenegger T."/>
            <person name="Winters P."/>
            <person name="Wipat A."/>
            <person name="Yamamoto H."/>
            <person name="Yamane K."/>
            <person name="Yasumoto K."/>
            <person name="Yata K."/>
            <person name="Yoshida K."/>
            <person name="Yoshikawa H.-F."/>
            <person name="Zumstein E."/>
            <person name="Yoshikawa H."/>
            <person name="Danchin A."/>
        </authorList>
    </citation>
    <scope>NUCLEOTIDE SEQUENCE [LARGE SCALE GENOMIC DNA]</scope>
    <source>
        <strain>168</strain>
    </source>
</reference>
<accession>O05525</accession>
<accession>Q797D2</accession>
<dbReference type="EC" id="3.4.-.-"/>
<dbReference type="EMBL" id="D88802">
    <property type="protein sequence ID" value="BAA19725.1"/>
    <property type="molecule type" value="Genomic_DNA"/>
</dbReference>
<dbReference type="EMBL" id="AL009126">
    <property type="protein sequence ID" value="CAB12420.1"/>
    <property type="molecule type" value="Genomic_DNA"/>
</dbReference>
<dbReference type="PIR" id="E69787">
    <property type="entry name" value="E69787"/>
</dbReference>
<dbReference type="RefSeq" id="NP_388482.1">
    <property type="nucleotide sequence ID" value="NC_000964.3"/>
</dbReference>
<dbReference type="RefSeq" id="WP_003234069.1">
    <property type="nucleotide sequence ID" value="NZ_OZ025638.1"/>
</dbReference>
<dbReference type="FunCoup" id="O05525">
    <property type="interactions" value="34"/>
</dbReference>
<dbReference type="STRING" id="224308.BSU06010"/>
<dbReference type="MEROPS" id="G05.007"/>
<dbReference type="PaxDb" id="224308-BSU06010"/>
<dbReference type="DNASU" id="938033"/>
<dbReference type="EnsemblBacteria" id="CAB12420">
    <property type="protein sequence ID" value="CAB12420"/>
    <property type="gene ID" value="BSU_06010"/>
</dbReference>
<dbReference type="GeneID" id="938033"/>
<dbReference type="KEGG" id="bsu:BSU06010"/>
<dbReference type="PATRIC" id="fig|224308.179.peg.646"/>
<dbReference type="eggNOG" id="COG1266">
    <property type="taxonomic scope" value="Bacteria"/>
</dbReference>
<dbReference type="InParanoid" id="O05525"/>
<dbReference type="OrthoDB" id="2194912at2"/>
<dbReference type="PhylomeDB" id="O05525"/>
<dbReference type="BioCyc" id="BSUB:BSU06010-MONOMER"/>
<dbReference type="Proteomes" id="UP000001570">
    <property type="component" value="Chromosome"/>
</dbReference>
<dbReference type="GO" id="GO:0005886">
    <property type="term" value="C:plasma membrane"/>
    <property type="evidence" value="ECO:0007669"/>
    <property type="project" value="UniProtKB-SubCell"/>
</dbReference>
<dbReference type="GO" id="GO:0004175">
    <property type="term" value="F:endopeptidase activity"/>
    <property type="evidence" value="ECO:0007669"/>
    <property type="project" value="UniProtKB-ARBA"/>
</dbReference>
<dbReference type="GO" id="GO:0080120">
    <property type="term" value="P:CAAX-box protein maturation"/>
    <property type="evidence" value="ECO:0007669"/>
    <property type="project" value="UniProtKB-ARBA"/>
</dbReference>
<dbReference type="GO" id="GO:0006508">
    <property type="term" value="P:proteolysis"/>
    <property type="evidence" value="ECO:0007669"/>
    <property type="project" value="UniProtKB-KW"/>
</dbReference>
<dbReference type="InterPro" id="IPR052710">
    <property type="entry name" value="CAAX_protease"/>
</dbReference>
<dbReference type="InterPro" id="IPR003675">
    <property type="entry name" value="Rce1/LyrA-like_dom"/>
</dbReference>
<dbReference type="PANTHER" id="PTHR36435:SF6">
    <property type="entry name" value="ABORTIVE INFECTION PROTEIN"/>
    <property type="match status" value="1"/>
</dbReference>
<dbReference type="PANTHER" id="PTHR36435">
    <property type="entry name" value="SLR1288 PROTEIN"/>
    <property type="match status" value="1"/>
</dbReference>
<dbReference type="Pfam" id="PF02517">
    <property type="entry name" value="Rce1-like"/>
    <property type="match status" value="1"/>
</dbReference>
<feature type="chain" id="PRO_0000390303" description="Putative membrane peptidase YdiL">
    <location>
        <begin position="1"/>
        <end position="244"/>
    </location>
</feature>
<feature type="transmembrane region" description="Helical" evidence="2">
    <location>
        <begin position="7"/>
        <end position="27"/>
    </location>
</feature>
<feature type="transmembrane region" description="Helical" evidence="2">
    <location>
        <begin position="44"/>
        <end position="64"/>
    </location>
</feature>
<feature type="transmembrane region" description="Helical" evidence="2">
    <location>
        <begin position="80"/>
        <end position="100"/>
    </location>
</feature>
<feature type="transmembrane region" description="Helical" evidence="2">
    <location>
        <begin position="127"/>
        <end position="147"/>
    </location>
</feature>
<feature type="transmembrane region" description="Helical" evidence="2">
    <location>
        <begin position="159"/>
        <end position="179"/>
    </location>
</feature>
<feature type="transmembrane region" description="Helical" evidence="2">
    <location>
        <begin position="202"/>
        <end position="222"/>
    </location>
</feature>
<feature type="active site" description="Proton donor/acceptor" evidence="1">
    <location>
        <position position="143"/>
    </location>
</feature>
<feature type="active site" description="Proton donor/acceptor" evidence="1">
    <location>
        <position position="176"/>
    </location>
</feature>
<feature type="site" description="Transition state stabilizer" evidence="1">
    <location>
        <position position="209"/>
    </location>
</feature>
<feature type="site" description="Transition state stabilizer" evidence="1">
    <location>
        <position position="213"/>
    </location>
</feature>
<comment type="function">
    <text evidence="1">May function as endopeptidase which proteolytically removes the C-terminal three residues of farnesylated peptides containing the CAAX motif where C is cysteine, A is an aliphatic amino acid and X is any amino acid.</text>
</comment>
<comment type="subcellular location">
    <subcellularLocation>
        <location evidence="1">Cell membrane</location>
        <topology evidence="1">Multi-pass membrane protein</topology>
    </subcellularLocation>
</comment>
<comment type="similarity">
    <text evidence="3">Belongs to the peptidase U48 family.</text>
</comment>
<organism>
    <name type="scientific">Bacillus subtilis (strain 168)</name>
    <dbReference type="NCBI Taxonomy" id="224308"/>
    <lineage>
        <taxon>Bacteria</taxon>
        <taxon>Bacillati</taxon>
        <taxon>Bacillota</taxon>
        <taxon>Bacilli</taxon>
        <taxon>Bacillales</taxon>
        <taxon>Bacillaceae</taxon>
        <taxon>Bacillus</taxon>
    </lineage>
</organism>
<proteinExistence type="inferred from homology"/>
<sequence length="244" mass="27590">MRKQYWFIILTYIIMQFSALIAIPLLFKFGYAGGQPTDENMLHAQGLWSVISFIACLVVVLLILRTVPKETLRNGQKDSIGLSILWAIAGFFIALFSQGIAGSIEYYVFGIGRESENTQAILDVIQAVPLMIIVSSIVGPILEEIIFRKIIFGALYEKTNFFFAGLISSVIFGIVHADLKHLLLYTAMGFTFAFLYARTKRIWVPIFAHLMMNTFVVIMQLEPVRNYLEQQSTQMQLIIGGLFL</sequence>
<name>YDIL_BACSU</name>
<keyword id="KW-1003">Cell membrane</keyword>
<keyword id="KW-0378">Hydrolase</keyword>
<keyword id="KW-0472">Membrane</keyword>
<keyword id="KW-0645">Protease</keyword>
<keyword id="KW-1185">Reference proteome</keyword>
<keyword id="KW-0812">Transmembrane</keyword>
<keyword id="KW-1133">Transmembrane helix</keyword>
<evidence type="ECO:0000250" key="1">
    <source>
        <dbReference type="UniProtKB" id="Q6LZY8"/>
    </source>
</evidence>
<evidence type="ECO:0000255" key="2"/>
<evidence type="ECO:0000305" key="3"/>
<protein>
    <recommendedName>
        <fullName>Putative membrane peptidase YdiL</fullName>
        <ecNumber>3.4.-.-</ecNumber>
    </recommendedName>
    <alternativeName>
        <fullName>Putative CAAX prenyl protease</fullName>
    </alternativeName>
</protein>
<gene>
    <name type="primary">ydiL</name>
    <name type="ordered locus">BSU06010</name>
</gene>